<proteinExistence type="evidence at transcript level"/>
<gene>
    <name evidence="1" type="primary">secA</name>
    <name type="ordered locus">BB_0154</name>
</gene>
<name>SECA_BORBU</name>
<sequence length="899" mass="102086">MLKAVLETTIGSKSKRDLKDYLPTLRNINKLERWALLLADEDFSKETEKLKDELKSGNSLENILERAFTLSREAARRRLKERPYDVQIIAGLALHKGKIIEMKTGEGKTLSSVQAAYLNSLTGDGVIIVTVNDYLAERDSNWMKPVFDLLGVSVGVVLSNMDYELRKAQYAKDITYVTNNELGFDYLRDNMRYDLNEKSLRKFNYCIIDEIDSILIDEARTPLIISGPTEGNTNAYLEVNSLVSFLKECSKDPKTGDYPLEIDDLDGDYTVDEKAKRISFTAKGLNNLEQLLVSKGIISGSMYTDSNFNYVHYMTQALKAHLLFLKNREYIVGDSGVEIVDEFTGRVLTGRRYSDGLHQAIEAKEGVRVANENKTMATITFQNLFRMFDKISGMTGTADTEAKEFHKIYNLDVVVVPTNRLLARIDEDDTIYYTEEFKFNAITDEVYKTYKKGQPVLVGTVSIEKSEILSAMFKNRGIKHEVLNAKNHSREAFIIAEAGAKHAVTIATNMAGRGTDIKLGGNIEHRVRKKIGTNVSLEEFQEAVKNERENYLKDYNEVKSLGGLYVIGSERHESRRIDNQLRGRSGRQGDPGRSRFYVSLEDDLMRLFAGDNLRSLMGKLGMATGEPITHSLLTKSLINAQKRVEDRNFEIRKHLLEYDDVITKQRDFIYAQRNSILEDTAIKDRILVALEEYLSFLLEGTKSSTVSNVFLNEVNSIFAYMLESLGSIENISSLDLKAKLMQIAKANLDEKENLIGRDLFNGFLRYEYLKNIDFKFQEHLANLDSLREAVYLRSYANKNPITEYKEEGFSIFSELIKDIKVSTIRRVLQLKLDSNSSDFKSTKKSRNVKPIHKELSGIVINENKSASNVQVVRSSPKIGRNEPCYCGSGKKYKNCHGKS</sequence>
<protein>
    <recommendedName>
        <fullName evidence="1">Protein translocase subunit SecA</fullName>
        <ecNumber evidence="1">7.4.2.8</ecNumber>
    </recommendedName>
</protein>
<evidence type="ECO:0000255" key="1">
    <source>
        <dbReference type="HAMAP-Rule" id="MF_01382"/>
    </source>
</evidence>
<evidence type="ECO:0000269" key="2">
    <source>
    </source>
</evidence>
<evidence type="ECO:0000305" key="3"/>
<comment type="function">
    <text evidence="1">Part of the Sec protein translocase complex. Interacts with the SecYEG preprotein conducting channel. Has a central role in coupling the hydrolysis of ATP to the transfer of proteins into and across the cell membrane, serving as an ATP-driven molecular motor driving the stepwise translocation of polypeptide chains across the membrane.</text>
</comment>
<comment type="catalytic activity">
    <reaction evidence="1">
        <text>ATP + H2O + cellular proteinSide 1 = ADP + phosphate + cellular proteinSide 2.</text>
        <dbReference type="EC" id="7.4.2.8"/>
    </reaction>
</comment>
<comment type="cofactor">
    <cofactor evidence="1">
        <name>Zn(2+)</name>
        <dbReference type="ChEBI" id="CHEBI:29105"/>
    </cofactor>
    <text evidence="1">May bind 1 zinc ion per subunit.</text>
</comment>
<comment type="subunit">
    <text evidence="1">Monomer and homodimer. Part of the essential Sec protein translocation apparatus which comprises SecA, SecYEG and auxiliary proteins SecDF. Other proteins may also be involved.</text>
</comment>
<comment type="subcellular location">
    <subcellularLocation>
        <location evidence="1">Cell inner membrane</location>
        <topology evidence="1">Peripheral membrane protein</topology>
        <orientation evidence="1">Cytoplasmic side</orientation>
    </subcellularLocation>
    <subcellularLocation>
        <location evidence="1">Cytoplasm</location>
    </subcellularLocation>
    <text evidence="1">Distribution is 50-50.</text>
</comment>
<comment type="induction">
    <text evidence="2">Part of the secA-sod operon (PubMed:10650199).</text>
</comment>
<comment type="similarity">
    <text evidence="1">Belongs to the SecA family.</text>
</comment>
<organism>
    <name type="scientific">Borreliella burgdorferi (strain ATCC 35210 / DSM 4680 / CIP 102532 / B31)</name>
    <name type="common">Borrelia burgdorferi</name>
    <dbReference type="NCBI Taxonomy" id="224326"/>
    <lineage>
        <taxon>Bacteria</taxon>
        <taxon>Pseudomonadati</taxon>
        <taxon>Spirochaetota</taxon>
        <taxon>Spirochaetia</taxon>
        <taxon>Spirochaetales</taxon>
        <taxon>Borreliaceae</taxon>
        <taxon>Borreliella</taxon>
    </lineage>
</organism>
<accession>O07497</accession>
<accession>O51176</accession>
<dbReference type="EC" id="7.4.2.8" evidence="1"/>
<dbReference type="EMBL" id="AF003354">
    <property type="protein sequence ID" value="AAC46347.1"/>
    <property type="molecule type" value="Genomic_DNA"/>
</dbReference>
<dbReference type="EMBL" id="AE000783">
    <property type="protein sequence ID" value="AAC66536.1"/>
    <property type="molecule type" value="Genomic_DNA"/>
</dbReference>
<dbReference type="PIR" id="B70119">
    <property type="entry name" value="B70119"/>
</dbReference>
<dbReference type="RefSeq" id="NP_212288.1">
    <property type="nucleotide sequence ID" value="NC_001318.1"/>
</dbReference>
<dbReference type="RefSeq" id="WP_002665461.1">
    <property type="nucleotide sequence ID" value="NC_001318.1"/>
</dbReference>
<dbReference type="SMR" id="O07497"/>
<dbReference type="STRING" id="224326.BB_0154"/>
<dbReference type="PaxDb" id="224326-BB_0154"/>
<dbReference type="EnsemblBacteria" id="AAC66536">
    <property type="protein sequence ID" value="AAC66536"/>
    <property type="gene ID" value="BB_0154"/>
</dbReference>
<dbReference type="KEGG" id="bbu:BB_0154"/>
<dbReference type="PATRIC" id="fig|224326.49.peg.551"/>
<dbReference type="HOGENOM" id="CLU_005314_3_0_12"/>
<dbReference type="OrthoDB" id="9805579at2"/>
<dbReference type="Proteomes" id="UP000001807">
    <property type="component" value="Chromosome"/>
</dbReference>
<dbReference type="GO" id="GO:0031522">
    <property type="term" value="C:cell envelope Sec protein transport complex"/>
    <property type="evidence" value="ECO:0007669"/>
    <property type="project" value="TreeGrafter"/>
</dbReference>
<dbReference type="GO" id="GO:0005829">
    <property type="term" value="C:cytosol"/>
    <property type="evidence" value="ECO:0007669"/>
    <property type="project" value="TreeGrafter"/>
</dbReference>
<dbReference type="GO" id="GO:0005886">
    <property type="term" value="C:plasma membrane"/>
    <property type="evidence" value="ECO:0007669"/>
    <property type="project" value="UniProtKB-SubCell"/>
</dbReference>
<dbReference type="GO" id="GO:0005524">
    <property type="term" value="F:ATP binding"/>
    <property type="evidence" value="ECO:0007669"/>
    <property type="project" value="UniProtKB-UniRule"/>
</dbReference>
<dbReference type="GO" id="GO:0046872">
    <property type="term" value="F:metal ion binding"/>
    <property type="evidence" value="ECO:0007669"/>
    <property type="project" value="UniProtKB-KW"/>
</dbReference>
<dbReference type="GO" id="GO:0008564">
    <property type="term" value="F:protein-exporting ATPase activity"/>
    <property type="evidence" value="ECO:0007669"/>
    <property type="project" value="UniProtKB-EC"/>
</dbReference>
<dbReference type="GO" id="GO:0065002">
    <property type="term" value="P:intracellular protein transmembrane transport"/>
    <property type="evidence" value="ECO:0007669"/>
    <property type="project" value="UniProtKB-UniRule"/>
</dbReference>
<dbReference type="GO" id="GO:0017038">
    <property type="term" value="P:protein import"/>
    <property type="evidence" value="ECO:0007669"/>
    <property type="project" value="InterPro"/>
</dbReference>
<dbReference type="GO" id="GO:0006605">
    <property type="term" value="P:protein targeting"/>
    <property type="evidence" value="ECO:0007669"/>
    <property type="project" value="UniProtKB-UniRule"/>
</dbReference>
<dbReference type="GO" id="GO:0043952">
    <property type="term" value="P:protein transport by the Sec complex"/>
    <property type="evidence" value="ECO:0007669"/>
    <property type="project" value="TreeGrafter"/>
</dbReference>
<dbReference type="CDD" id="cd17928">
    <property type="entry name" value="DEXDc_SecA"/>
    <property type="match status" value="1"/>
</dbReference>
<dbReference type="CDD" id="cd18803">
    <property type="entry name" value="SF2_C_secA"/>
    <property type="match status" value="1"/>
</dbReference>
<dbReference type="FunFam" id="3.40.50.300:FF:000113">
    <property type="entry name" value="Preprotein translocase subunit SecA"/>
    <property type="match status" value="1"/>
</dbReference>
<dbReference type="Gene3D" id="1.10.3060.10">
    <property type="entry name" value="Helical scaffold and wing domains of SecA"/>
    <property type="match status" value="1"/>
</dbReference>
<dbReference type="Gene3D" id="3.40.50.300">
    <property type="entry name" value="P-loop containing nucleotide triphosphate hydrolases"/>
    <property type="match status" value="2"/>
</dbReference>
<dbReference type="Gene3D" id="3.90.1440.10">
    <property type="entry name" value="SecA, preprotein cross-linking domain"/>
    <property type="match status" value="1"/>
</dbReference>
<dbReference type="HAMAP" id="MF_01382">
    <property type="entry name" value="SecA"/>
    <property type="match status" value="1"/>
</dbReference>
<dbReference type="InterPro" id="IPR014001">
    <property type="entry name" value="Helicase_ATP-bd"/>
</dbReference>
<dbReference type="InterPro" id="IPR001650">
    <property type="entry name" value="Helicase_C-like"/>
</dbReference>
<dbReference type="InterPro" id="IPR027417">
    <property type="entry name" value="P-loop_NTPase"/>
</dbReference>
<dbReference type="InterPro" id="IPR004027">
    <property type="entry name" value="SEC_C_motif"/>
</dbReference>
<dbReference type="InterPro" id="IPR000185">
    <property type="entry name" value="SecA"/>
</dbReference>
<dbReference type="InterPro" id="IPR020937">
    <property type="entry name" value="SecA_CS"/>
</dbReference>
<dbReference type="InterPro" id="IPR011115">
    <property type="entry name" value="SecA_DEAD"/>
</dbReference>
<dbReference type="InterPro" id="IPR014018">
    <property type="entry name" value="SecA_motor_DEAD"/>
</dbReference>
<dbReference type="InterPro" id="IPR011130">
    <property type="entry name" value="SecA_preprotein_X-link_dom"/>
</dbReference>
<dbReference type="InterPro" id="IPR044722">
    <property type="entry name" value="SecA_SF2_C"/>
</dbReference>
<dbReference type="InterPro" id="IPR011116">
    <property type="entry name" value="SecA_Wing/Scaffold"/>
</dbReference>
<dbReference type="InterPro" id="IPR036266">
    <property type="entry name" value="SecA_Wing/Scaffold_sf"/>
</dbReference>
<dbReference type="InterPro" id="IPR036670">
    <property type="entry name" value="SecA_X-link_sf"/>
</dbReference>
<dbReference type="NCBIfam" id="NF009538">
    <property type="entry name" value="PRK12904.1"/>
    <property type="match status" value="1"/>
</dbReference>
<dbReference type="NCBIfam" id="TIGR00963">
    <property type="entry name" value="secA"/>
    <property type="match status" value="1"/>
</dbReference>
<dbReference type="PANTHER" id="PTHR30612:SF0">
    <property type="entry name" value="CHLOROPLAST PROTEIN-TRANSPORTING ATPASE"/>
    <property type="match status" value="1"/>
</dbReference>
<dbReference type="PANTHER" id="PTHR30612">
    <property type="entry name" value="SECA INNER MEMBRANE COMPONENT OF SEC PROTEIN SECRETION SYSTEM"/>
    <property type="match status" value="1"/>
</dbReference>
<dbReference type="Pfam" id="PF21090">
    <property type="entry name" value="P-loop_SecA"/>
    <property type="match status" value="1"/>
</dbReference>
<dbReference type="Pfam" id="PF02810">
    <property type="entry name" value="SEC-C"/>
    <property type="match status" value="1"/>
</dbReference>
<dbReference type="Pfam" id="PF07517">
    <property type="entry name" value="SecA_DEAD"/>
    <property type="match status" value="1"/>
</dbReference>
<dbReference type="Pfam" id="PF01043">
    <property type="entry name" value="SecA_PP_bind"/>
    <property type="match status" value="1"/>
</dbReference>
<dbReference type="Pfam" id="PF07516">
    <property type="entry name" value="SecA_SW"/>
    <property type="match status" value="1"/>
</dbReference>
<dbReference type="PRINTS" id="PR00906">
    <property type="entry name" value="SECA"/>
</dbReference>
<dbReference type="SMART" id="SM00957">
    <property type="entry name" value="SecA_DEAD"/>
    <property type="match status" value="1"/>
</dbReference>
<dbReference type="SMART" id="SM00958">
    <property type="entry name" value="SecA_PP_bind"/>
    <property type="match status" value="1"/>
</dbReference>
<dbReference type="SUPFAM" id="SSF81886">
    <property type="entry name" value="Helical scaffold and wing domains of SecA"/>
    <property type="match status" value="1"/>
</dbReference>
<dbReference type="SUPFAM" id="SSF52540">
    <property type="entry name" value="P-loop containing nucleoside triphosphate hydrolases"/>
    <property type="match status" value="2"/>
</dbReference>
<dbReference type="SUPFAM" id="SSF81767">
    <property type="entry name" value="Pre-protein crosslinking domain of SecA"/>
    <property type="match status" value="1"/>
</dbReference>
<dbReference type="PROSITE" id="PS01312">
    <property type="entry name" value="SECA"/>
    <property type="match status" value="1"/>
</dbReference>
<dbReference type="PROSITE" id="PS51196">
    <property type="entry name" value="SECA_MOTOR_DEAD"/>
    <property type="match status" value="1"/>
</dbReference>
<keyword id="KW-0067">ATP-binding</keyword>
<keyword id="KW-0997">Cell inner membrane</keyword>
<keyword id="KW-1003">Cell membrane</keyword>
<keyword id="KW-0963">Cytoplasm</keyword>
<keyword id="KW-0472">Membrane</keyword>
<keyword id="KW-0479">Metal-binding</keyword>
<keyword id="KW-0547">Nucleotide-binding</keyword>
<keyword id="KW-0653">Protein transport</keyword>
<keyword id="KW-1185">Reference proteome</keyword>
<keyword id="KW-1278">Translocase</keyword>
<keyword id="KW-0811">Translocation</keyword>
<keyword id="KW-0813">Transport</keyword>
<keyword id="KW-0862">Zinc</keyword>
<reference key="1">
    <citation type="journal article" date="1998" name="Biochim. Biophys. Acta">
        <title>Sequence and phylogenetic analysis of the Borrelia burgdorferi secA gene.</title>
        <authorList>
            <person name="Guina T."/>
            <person name="Helfet-Hilliker D."/>
            <person name="Ramamurthy V."/>
            <person name="Oliver D."/>
        </authorList>
    </citation>
    <scope>NUCLEOTIDE SEQUENCE [GENOMIC DNA]</scope>
    <source>
        <strain>Sh-2</strain>
    </source>
</reference>
<reference key="2">
    <citation type="journal article" date="1997" name="Nature">
        <title>Genomic sequence of a Lyme disease spirochaete, Borrelia burgdorferi.</title>
        <authorList>
            <person name="Fraser C.M."/>
            <person name="Casjens S."/>
            <person name="Huang W.M."/>
            <person name="Sutton G.G."/>
            <person name="Clayton R.A."/>
            <person name="Lathigra R."/>
            <person name="White O."/>
            <person name="Ketchum K.A."/>
            <person name="Dodson R.J."/>
            <person name="Hickey E.K."/>
            <person name="Gwinn M.L."/>
            <person name="Dougherty B.A."/>
            <person name="Tomb J.-F."/>
            <person name="Fleischmann R.D."/>
            <person name="Richardson D.L."/>
            <person name="Peterson J.D."/>
            <person name="Kerlavage A.R."/>
            <person name="Quackenbush J."/>
            <person name="Salzberg S.L."/>
            <person name="Hanson M."/>
            <person name="van Vugt R."/>
            <person name="Palmer N."/>
            <person name="Adams M.D."/>
            <person name="Gocayne J.D."/>
            <person name="Weidman J.F."/>
            <person name="Utterback T.R."/>
            <person name="Watthey L."/>
            <person name="McDonald L.A."/>
            <person name="Artiach P."/>
            <person name="Bowman C."/>
            <person name="Garland S.A."/>
            <person name="Fujii C."/>
            <person name="Cotton M.D."/>
            <person name="Horst K."/>
            <person name="Roberts K.M."/>
            <person name="Hatch B."/>
            <person name="Smith H.O."/>
            <person name="Venter J.C."/>
        </authorList>
    </citation>
    <scope>NUCLEOTIDE SEQUENCE [LARGE SCALE GENOMIC DNA]</scope>
    <source>
        <strain>ATCC 35210 / DSM 4680 / CIP 102532 / B31</strain>
    </source>
</reference>
<reference key="3">
    <citation type="journal article" date="2000" name="FEMS Microbiol. Lett.">
        <title>Transcriptional analysis of a superoxide dismutase gene of Borrelia burgdorferi.</title>
        <authorList>
            <person name="Nichols T.L."/>
            <person name="Whitehouse C.A."/>
            <person name="Austin F.E."/>
        </authorList>
    </citation>
    <scope>OPERON STRUCTURE</scope>
</reference>
<feature type="chain" id="PRO_0000109577" description="Protein translocase subunit SecA">
    <location>
        <begin position="1"/>
        <end position="899"/>
    </location>
</feature>
<feature type="binding site" evidence="1">
    <location>
        <position position="87"/>
    </location>
    <ligand>
        <name>ATP</name>
        <dbReference type="ChEBI" id="CHEBI:30616"/>
    </ligand>
</feature>
<feature type="binding site" evidence="1">
    <location>
        <begin position="105"/>
        <end position="109"/>
    </location>
    <ligand>
        <name>ATP</name>
        <dbReference type="ChEBI" id="CHEBI:30616"/>
    </ligand>
</feature>
<feature type="binding site" evidence="1">
    <location>
        <position position="516"/>
    </location>
    <ligand>
        <name>ATP</name>
        <dbReference type="ChEBI" id="CHEBI:30616"/>
    </ligand>
</feature>
<feature type="binding site" evidence="1">
    <location>
        <position position="884"/>
    </location>
    <ligand>
        <name>Zn(2+)</name>
        <dbReference type="ChEBI" id="CHEBI:29105"/>
    </ligand>
</feature>
<feature type="binding site" evidence="1">
    <location>
        <position position="886"/>
    </location>
    <ligand>
        <name>Zn(2+)</name>
        <dbReference type="ChEBI" id="CHEBI:29105"/>
    </ligand>
</feature>
<feature type="binding site" evidence="1">
    <location>
        <position position="895"/>
    </location>
    <ligand>
        <name>Zn(2+)</name>
        <dbReference type="ChEBI" id="CHEBI:29105"/>
    </ligand>
</feature>
<feature type="binding site" evidence="1">
    <location>
        <position position="896"/>
    </location>
    <ligand>
        <name>Zn(2+)</name>
        <dbReference type="ChEBI" id="CHEBI:29105"/>
    </ligand>
</feature>
<feature type="sequence conflict" description="In Ref. 1; AAC46347." evidence="3" ref="1">
    <original>L</original>
    <variation>F</variation>
    <location>
        <position position="265"/>
    </location>
</feature>
<feature type="sequence conflict" description="In Ref. 1; AAC46347." evidence="3" ref="1">
    <original>H</original>
    <variation>D</variation>
    <location>
        <position position="406"/>
    </location>
</feature>
<feature type="sequence conflict" description="In Ref. 1; AAC46347." evidence="3" ref="1">
    <original>N</original>
    <variation>S</variation>
    <location>
        <position position="475"/>
    </location>
</feature>